<name>CYSI_ECO55</name>
<accession>B7LEI2</accession>
<organism>
    <name type="scientific">Escherichia coli (strain 55989 / EAEC)</name>
    <dbReference type="NCBI Taxonomy" id="585055"/>
    <lineage>
        <taxon>Bacteria</taxon>
        <taxon>Pseudomonadati</taxon>
        <taxon>Pseudomonadota</taxon>
        <taxon>Gammaproteobacteria</taxon>
        <taxon>Enterobacterales</taxon>
        <taxon>Enterobacteriaceae</taxon>
        <taxon>Escherichia</taxon>
    </lineage>
</organism>
<evidence type="ECO:0000255" key="1">
    <source>
        <dbReference type="HAMAP-Rule" id="MF_01540"/>
    </source>
</evidence>
<protein>
    <recommendedName>
        <fullName evidence="1">Sulfite reductase [NADPH] hemoprotein beta-component</fullName>
        <shortName evidence="1">SiR-HP</shortName>
        <shortName evidence="1">SiRHP</shortName>
        <ecNumber evidence="1">1.8.1.2</ecNumber>
    </recommendedName>
</protein>
<keyword id="KW-0004">4Fe-4S</keyword>
<keyword id="KW-0028">Amino-acid biosynthesis</keyword>
<keyword id="KW-0198">Cysteine biosynthesis</keyword>
<keyword id="KW-0349">Heme</keyword>
<keyword id="KW-0408">Iron</keyword>
<keyword id="KW-0411">Iron-sulfur</keyword>
<keyword id="KW-0479">Metal-binding</keyword>
<keyword id="KW-0521">NADP</keyword>
<keyword id="KW-0560">Oxidoreductase</keyword>
<keyword id="KW-1185">Reference proteome</keyword>
<gene>
    <name evidence="1" type="primary">cysI</name>
    <name type="ordered locus">EC55989_3037</name>
</gene>
<feature type="chain" id="PRO_1000185231" description="Sulfite reductase [NADPH] hemoprotein beta-component">
    <location>
        <begin position="1"/>
        <end position="570"/>
    </location>
</feature>
<feature type="binding site" evidence="1">
    <location>
        <position position="434"/>
    </location>
    <ligand>
        <name>[4Fe-4S] cluster</name>
        <dbReference type="ChEBI" id="CHEBI:49883"/>
    </ligand>
</feature>
<feature type="binding site" evidence="1">
    <location>
        <position position="440"/>
    </location>
    <ligand>
        <name>[4Fe-4S] cluster</name>
        <dbReference type="ChEBI" id="CHEBI:49883"/>
    </ligand>
</feature>
<feature type="binding site" evidence="1">
    <location>
        <position position="479"/>
    </location>
    <ligand>
        <name>[4Fe-4S] cluster</name>
        <dbReference type="ChEBI" id="CHEBI:49883"/>
    </ligand>
</feature>
<feature type="binding site" evidence="1">
    <location>
        <position position="483"/>
    </location>
    <ligand>
        <name>[4Fe-4S] cluster</name>
        <dbReference type="ChEBI" id="CHEBI:49883"/>
    </ligand>
</feature>
<feature type="binding site" description="axial binding residue" evidence="1">
    <location>
        <position position="483"/>
    </location>
    <ligand>
        <name>siroheme</name>
        <dbReference type="ChEBI" id="CHEBI:60052"/>
    </ligand>
    <ligandPart>
        <name>Fe</name>
        <dbReference type="ChEBI" id="CHEBI:18248"/>
    </ligandPart>
</feature>
<reference key="1">
    <citation type="journal article" date="2009" name="PLoS Genet.">
        <title>Organised genome dynamics in the Escherichia coli species results in highly diverse adaptive paths.</title>
        <authorList>
            <person name="Touchon M."/>
            <person name="Hoede C."/>
            <person name="Tenaillon O."/>
            <person name="Barbe V."/>
            <person name="Baeriswyl S."/>
            <person name="Bidet P."/>
            <person name="Bingen E."/>
            <person name="Bonacorsi S."/>
            <person name="Bouchier C."/>
            <person name="Bouvet O."/>
            <person name="Calteau A."/>
            <person name="Chiapello H."/>
            <person name="Clermont O."/>
            <person name="Cruveiller S."/>
            <person name="Danchin A."/>
            <person name="Diard M."/>
            <person name="Dossat C."/>
            <person name="Karoui M.E."/>
            <person name="Frapy E."/>
            <person name="Garry L."/>
            <person name="Ghigo J.M."/>
            <person name="Gilles A.M."/>
            <person name="Johnson J."/>
            <person name="Le Bouguenec C."/>
            <person name="Lescat M."/>
            <person name="Mangenot S."/>
            <person name="Martinez-Jehanne V."/>
            <person name="Matic I."/>
            <person name="Nassif X."/>
            <person name="Oztas S."/>
            <person name="Petit M.A."/>
            <person name="Pichon C."/>
            <person name="Rouy Z."/>
            <person name="Ruf C.S."/>
            <person name="Schneider D."/>
            <person name="Tourret J."/>
            <person name="Vacherie B."/>
            <person name="Vallenet D."/>
            <person name="Medigue C."/>
            <person name="Rocha E.P.C."/>
            <person name="Denamur E."/>
        </authorList>
    </citation>
    <scope>NUCLEOTIDE SEQUENCE [LARGE SCALE GENOMIC DNA]</scope>
    <source>
        <strain>55989 / EAEC</strain>
    </source>
</reference>
<sequence length="570" mass="63960">MSEKHPGPLVVEGKLTDAERMKLESNYLRGTIAEDLNDGLTGGFKGDNFLLIRFHGMYQQDDRDIRAERAEQKLEPRHAMLLRCRLPGGVITTKQWQAIDKFAGENTIYGSIRLTNRQTFQFHGILKKNVKPVHQMLHSVGLDALATANDMNRNVLCTSNPYESQLHAEAYEWAKKISEHLLPRTRAYAEIWLDQEKVATTDEEPILGQTYLPRKFKTTVVIPPQNDIDLHANDMNFVAIAENGKLVGFNLLVGGGLSIEHGNKKTYARTASEFGYLPLEHTLAVAEAVVTTQRDWGNRTDRKNAKTKYTLERVGVETFKAEVERRAGIKFEPIRPYEFTGRGDRIGWVKGIDDNWHLTLFIENGRILDYPGRPLKTGLLEIAKIHKGDFRITANQNLIIAGVPESEKAKIEKIAKESGLMNAVTPQRENSMACVSFPTCPLAMAEAERFLPSFIDNIDNLMAKHGVSDEHIVMRVTGCPNGCGRAMLAEVGLVGKAPGRYNLHLGGNRIGTRIPRMYKENITEPEILASLDELIGRWAKEREAGEGFGDFTVRAGIIRPVLDPARDLWD</sequence>
<proteinExistence type="inferred from homology"/>
<comment type="function">
    <text evidence="1">Component of the sulfite reductase complex that catalyzes the 6-electron reduction of sulfite to sulfide. This is one of several activities required for the biosynthesis of L-cysteine from sulfate.</text>
</comment>
<comment type="catalytic activity">
    <reaction evidence="1">
        <text>hydrogen sulfide + 3 NADP(+) + 3 H2O = sulfite + 3 NADPH + 4 H(+)</text>
        <dbReference type="Rhea" id="RHEA:13801"/>
        <dbReference type="ChEBI" id="CHEBI:15377"/>
        <dbReference type="ChEBI" id="CHEBI:15378"/>
        <dbReference type="ChEBI" id="CHEBI:17359"/>
        <dbReference type="ChEBI" id="CHEBI:29919"/>
        <dbReference type="ChEBI" id="CHEBI:57783"/>
        <dbReference type="ChEBI" id="CHEBI:58349"/>
        <dbReference type="EC" id="1.8.1.2"/>
    </reaction>
</comment>
<comment type="cofactor">
    <cofactor evidence="1">
        <name>siroheme</name>
        <dbReference type="ChEBI" id="CHEBI:60052"/>
    </cofactor>
    <text evidence="1">Binds 1 siroheme per subunit.</text>
</comment>
<comment type="cofactor">
    <cofactor evidence="1">
        <name>[4Fe-4S] cluster</name>
        <dbReference type="ChEBI" id="CHEBI:49883"/>
    </cofactor>
    <text evidence="1">Binds 1 [4Fe-4S] cluster per subunit.</text>
</comment>
<comment type="pathway">
    <text evidence="1">Sulfur metabolism; hydrogen sulfide biosynthesis; hydrogen sulfide from sulfite (NADPH route): step 1/1.</text>
</comment>
<comment type="subunit">
    <text evidence="1">Alpha(8)-beta(8). The alpha component is a flavoprotein, the beta component is a hemoprotein.</text>
</comment>
<comment type="similarity">
    <text evidence="1">Belongs to the nitrite and sulfite reductase 4Fe-4S domain family.</text>
</comment>
<dbReference type="EC" id="1.8.1.2" evidence="1"/>
<dbReference type="EMBL" id="CU928145">
    <property type="protein sequence ID" value="CAU98919.1"/>
    <property type="molecule type" value="Genomic_DNA"/>
</dbReference>
<dbReference type="RefSeq" id="WP_001290706.1">
    <property type="nucleotide sequence ID" value="NZ_CP028304.1"/>
</dbReference>
<dbReference type="SMR" id="B7LEI2"/>
<dbReference type="GeneID" id="75205593"/>
<dbReference type="KEGG" id="eck:EC55989_3037"/>
<dbReference type="HOGENOM" id="CLU_001975_3_2_6"/>
<dbReference type="UniPathway" id="UPA00140">
    <property type="reaction ID" value="UER00207"/>
</dbReference>
<dbReference type="Proteomes" id="UP000000746">
    <property type="component" value="Chromosome"/>
</dbReference>
<dbReference type="GO" id="GO:0009337">
    <property type="term" value="C:sulfite reductase complex (NADPH)"/>
    <property type="evidence" value="ECO:0007669"/>
    <property type="project" value="InterPro"/>
</dbReference>
<dbReference type="GO" id="GO:0051539">
    <property type="term" value="F:4 iron, 4 sulfur cluster binding"/>
    <property type="evidence" value="ECO:0007669"/>
    <property type="project" value="UniProtKB-KW"/>
</dbReference>
<dbReference type="GO" id="GO:0020037">
    <property type="term" value="F:heme binding"/>
    <property type="evidence" value="ECO:0007669"/>
    <property type="project" value="InterPro"/>
</dbReference>
<dbReference type="GO" id="GO:0046872">
    <property type="term" value="F:metal ion binding"/>
    <property type="evidence" value="ECO:0007669"/>
    <property type="project" value="UniProtKB-KW"/>
</dbReference>
<dbReference type="GO" id="GO:0050661">
    <property type="term" value="F:NADP binding"/>
    <property type="evidence" value="ECO:0007669"/>
    <property type="project" value="InterPro"/>
</dbReference>
<dbReference type="GO" id="GO:0050311">
    <property type="term" value="F:sulfite reductase (ferredoxin) activity"/>
    <property type="evidence" value="ECO:0007669"/>
    <property type="project" value="TreeGrafter"/>
</dbReference>
<dbReference type="GO" id="GO:0004783">
    <property type="term" value="F:sulfite reductase (NADPH) activity"/>
    <property type="evidence" value="ECO:0007669"/>
    <property type="project" value="UniProtKB-UniRule"/>
</dbReference>
<dbReference type="GO" id="GO:0019344">
    <property type="term" value="P:cysteine biosynthetic process"/>
    <property type="evidence" value="ECO:0007669"/>
    <property type="project" value="UniProtKB-KW"/>
</dbReference>
<dbReference type="GO" id="GO:0070814">
    <property type="term" value="P:hydrogen sulfide biosynthetic process"/>
    <property type="evidence" value="ECO:0007669"/>
    <property type="project" value="UniProtKB-UniRule"/>
</dbReference>
<dbReference type="GO" id="GO:0000103">
    <property type="term" value="P:sulfate assimilation"/>
    <property type="evidence" value="ECO:0007669"/>
    <property type="project" value="UniProtKB-UniRule"/>
</dbReference>
<dbReference type="FunFam" id="3.30.413.10:FF:000003">
    <property type="entry name" value="Sulfite reductase [NADPH] hemoprotein beta-component"/>
    <property type="match status" value="1"/>
</dbReference>
<dbReference type="FunFam" id="3.30.413.10:FF:000004">
    <property type="entry name" value="Sulfite reductase [NADPH] hemoprotein beta-component"/>
    <property type="match status" value="1"/>
</dbReference>
<dbReference type="Gene3D" id="3.30.413.10">
    <property type="entry name" value="Sulfite Reductase Hemoprotein, domain 1"/>
    <property type="match status" value="2"/>
</dbReference>
<dbReference type="HAMAP" id="MF_01540">
    <property type="entry name" value="CysI"/>
    <property type="match status" value="1"/>
</dbReference>
<dbReference type="InterPro" id="IPR011786">
    <property type="entry name" value="CysI"/>
</dbReference>
<dbReference type="InterPro" id="IPR005117">
    <property type="entry name" value="NiRdtase/SiRdtase_haem-b_fer"/>
</dbReference>
<dbReference type="InterPro" id="IPR036136">
    <property type="entry name" value="Nit/Sulf_reduc_fer-like_dom_sf"/>
</dbReference>
<dbReference type="InterPro" id="IPR006067">
    <property type="entry name" value="NO2/SO3_Rdtase_4Fe4S_dom"/>
</dbReference>
<dbReference type="InterPro" id="IPR045169">
    <property type="entry name" value="NO2/SO3_Rdtase_4Fe4S_prot"/>
</dbReference>
<dbReference type="InterPro" id="IPR045854">
    <property type="entry name" value="NO2/SO3_Rdtase_4Fe4S_sf"/>
</dbReference>
<dbReference type="InterPro" id="IPR006066">
    <property type="entry name" value="NO2/SO3_Rdtase_FeS/sirohaem_BS"/>
</dbReference>
<dbReference type="NCBIfam" id="TIGR02041">
    <property type="entry name" value="CysI"/>
    <property type="match status" value="1"/>
</dbReference>
<dbReference type="NCBIfam" id="NF010029">
    <property type="entry name" value="PRK13504.1"/>
    <property type="match status" value="1"/>
</dbReference>
<dbReference type="PANTHER" id="PTHR11493:SF47">
    <property type="entry name" value="SULFITE REDUCTASE [NADPH] SUBUNIT BETA"/>
    <property type="match status" value="1"/>
</dbReference>
<dbReference type="PANTHER" id="PTHR11493">
    <property type="entry name" value="SULFITE REDUCTASE [NADPH] SUBUNIT BETA-RELATED"/>
    <property type="match status" value="1"/>
</dbReference>
<dbReference type="Pfam" id="PF01077">
    <property type="entry name" value="NIR_SIR"/>
    <property type="match status" value="1"/>
</dbReference>
<dbReference type="Pfam" id="PF03460">
    <property type="entry name" value="NIR_SIR_ferr"/>
    <property type="match status" value="2"/>
</dbReference>
<dbReference type="PRINTS" id="PR00397">
    <property type="entry name" value="SIROHAEM"/>
</dbReference>
<dbReference type="SUPFAM" id="SSF56014">
    <property type="entry name" value="Nitrite and sulphite reductase 4Fe-4S domain-like"/>
    <property type="match status" value="2"/>
</dbReference>
<dbReference type="SUPFAM" id="SSF55124">
    <property type="entry name" value="Nitrite/Sulfite reductase N-terminal domain-like"/>
    <property type="match status" value="2"/>
</dbReference>
<dbReference type="PROSITE" id="PS00365">
    <property type="entry name" value="NIR_SIR"/>
    <property type="match status" value="1"/>
</dbReference>